<reference key="1">
    <citation type="journal article" date="2005" name="Genome Biol.">
        <title>Full-length cDNAs from chicken bursal lymphocytes to facilitate gene function analysis.</title>
        <authorList>
            <person name="Caldwell R.B."/>
            <person name="Kierzek A.M."/>
            <person name="Arakawa H."/>
            <person name="Bezzubov Y."/>
            <person name="Zaim J."/>
            <person name="Fiedler P."/>
            <person name="Kutter S."/>
            <person name="Blagodatski A."/>
            <person name="Kostovska D."/>
            <person name="Koter M."/>
            <person name="Plachy J."/>
            <person name="Carninci P."/>
            <person name="Hayashizaki Y."/>
            <person name="Buerstedde J.-M."/>
        </authorList>
    </citation>
    <scope>NUCLEOTIDE SEQUENCE [LARGE SCALE MRNA]</scope>
    <source>
        <strain>CB</strain>
        <tissue>Bursa of Fabricius</tissue>
    </source>
</reference>
<protein>
    <recommendedName>
        <fullName>RNA polymerase II subunit A C-terminal domain phosphatase SSU72</fullName>
        <shortName>CTD phosphatase SSU72</shortName>
        <ecNumber>3.1.3.16</ecNumber>
    </recommendedName>
</protein>
<feature type="chain" id="PRO_0000330015" description="RNA polymerase II subunit A C-terminal domain phosphatase SSU72">
    <location>
        <begin position="1"/>
        <end position="194"/>
    </location>
</feature>
<feature type="coiled-coil region" evidence="2">
    <location>
        <begin position="160"/>
        <end position="186"/>
    </location>
</feature>
<accession>Q5ZJQ7</accession>
<comment type="function">
    <text evidence="1">May be involved in the C-terminal domain of RNA polymerase II dephosphorylation, RNA processing and termination.</text>
</comment>
<comment type="catalytic activity">
    <reaction>
        <text>O-phospho-L-seryl-[protein] + H2O = L-seryl-[protein] + phosphate</text>
        <dbReference type="Rhea" id="RHEA:20629"/>
        <dbReference type="Rhea" id="RHEA-COMP:9863"/>
        <dbReference type="Rhea" id="RHEA-COMP:11604"/>
        <dbReference type="ChEBI" id="CHEBI:15377"/>
        <dbReference type="ChEBI" id="CHEBI:29999"/>
        <dbReference type="ChEBI" id="CHEBI:43474"/>
        <dbReference type="ChEBI" id="CHEBI:83421"/>
        <dbReference type="EC" id="3.1.3.16"/>
    </reaction>
</comment>
<comment type="catalytic activity">
    <reaction>
        <text>O-phospho-L-threonyl-[protein] + H2O = L-threonyl-[protein] + phosphate</text>
        <dbReference type="Rhea" id="RHEA:47004"/>
        <dbReference type="Rhea" id="RHEA-COMP:11060"/>
        <dbReference type="Rhea" id="RHEA-COMP:11605"/>
        <dbReference type="ChEBI" id="CHEBI:15377"/>
        <dbReference type="ChEBI" id="CHEBI:30013"/>
        <dbReference type="ChEBI" id="CHEBI:43474"/>
        <dbReference type="ChEBI" id="CHEBI:61977"/>
        <dbReference type="EC" id="3.1.3.16"/>
    </reaction>
</comment>
<comment type="subcellular location">
    <subcellularLocation>
        <location evidence="1">Nucleus</location>
    </subcellularLocation>
    <subcellularLocation>
        <location evidence="1">Cytoplasm</location>
    </subcellularLocation>
    <text evidence="1">Predominantly in the cytosol.</text>
</comment>
<comment type="similarity">
    <text evidence="3">Belongs to the SSU72 phosphatase family.</text>
</comment>
<evidence type="ECO:0000250" key="1"/>
<evidence type="ECO:0000255" key="2"/>
<evidence type="ECO:0000305" key="3"/>
<gene>
    <name type="primary">SSU72</name>
    <name type="ORF">RCJMB04_16f24</name>
</gene>
<dbReference type="EC" id="3.1.3.16"/>
<dbReference type="EMBL" id="AJ720377">
    <property type="protein sequence ID" value="CAG32036.1"/>
    <property type="molecule type" value="mRNA"/>
</dbReference>
<dbReference type="RefSeq" id="NP_001007876.1">
    <property type="nucleotide sequence ID" value="NM_001007875.2"/>
</dbReference>
<dbReference type="SMR" id="Q5ZJQ7"/>
<dbReference type="FunCoup" id="Q5ZJQ7">
    <property type="interactions" value="2279"/>
</dbReference>
<dbReference type="STRING" id="9031.ENSGALP00000002256"/>
<dbReference type="PaxDb" id="9031-ENSGALP00000002256"/>
<dbReference type="Ensembl" id="ENSGALT00010048900.1">
    <property type="protein sequence ID" value="ENSGALP00010028904.1"/>
    <property type="gene ID" value="ENSGALG00010020261.1"/>
</dbReference>
<dbReference type="GeneID" id="419410"/>
<dbReference type="KEGG" id="gga:419410"/>
<dbReference type="CTD" id="29101"/>
<dbReference type="VEuPathDB" id="HostDB:geneid_419410"/>
<dbReference type="eggNOG" id="KOG2424">
    <property type="taxonomic scope" value="Eukaryota"/>
</dbReference>
<dbReference type="GeneTree" id="ENSGT00390000010165"/>
<dbReference type="HOGENOM" id="CLU_062463_2_1_1"/>
<dbReference type="InParanoid" id="Q5ZJQ7"/>
<dbReference type="OMA" id="PNCYEFG"/>
<dbReference type="OrthoDB" id="57957at2759"/>
<dbReference type="PhylomeDB" id="Q5ZJQ7"/>
<dbReference type="TreeFam" id="TF300194"/>
<dbReference type="Reactome" id="R-GGA-6807505">
    <property type="pathway name" value="RNA polymerase II transcribes snRNA genes"/>
</dbReference>
<dbReference type="PRO" id="PR:Q5ZJQ7"/>
<dbReference type="Proteomes" id="UP000000539">
    <property type="component" value="Chromosome 21"/>
</dbReference>
<dbReference type="Bgee" id="ENSGALG00000001489">
    <property type="expression patterns" value="Expressed in liver and 14 other cell types or tissues"/>
</dbReference>
<dbReference type="GO" id="GO:0005737">
    <property type="term" value="C:cytoplasm"/>
    <property type="evidence" value="ECO:0007669"/>
    <property type="project" value="UniProtKB-SubCell"/>
</dbReference>
<dbReference type="GO" id="GO:0005847">
    <property type="term" value="C:mRNA cleavage and polyadenylation specificity factor complex"/>
    <property type="evidence" value="ECO:0000318"/>
    <property type="project" value="GO_Central"/>
</dbReference>
<dbReference type="GO" id="GO:0008420">
    <property type="term" value="F:RNA polymerase II CTD heptapeptide repeat phosphatase activity"/>
    <property type="evidence" value="ECO:0000318"/>
    <property type="project" value="GO_Central"/>
</dbReference>
<dbReference type="GO" id="GO:0006397">
    <property type="term" value="P:mRNA processing"/>
    <property type="evidence" value="ECO:0007669"/>
    <property type="project" value="UniProtKB-KW"/>
</dbReference>
<dbReference type="GO" id="GO:0006369">
    <property type="term" value="P:termination of RNA polymerase II transcription"/>
    <property type="evidence" value="ECO:0000318"/>
    <property type="project" value="GO_Central"/>
</dbReference>
<dbReference type="FunFam" id="3.40.50.2300:FF:000039">
    <property type="entry name" value="RNA polymerase II subunit A C-terminal domain phosphatase"/>
    <property type="match status" value="1"/>
</dbReference>
<dbReference type="FunFam" id="3.40.50.2300:FF:000066">
    <property type="entry name" value="RNA polymerase II subunit A C-terminal domain phosphatase SSU72"/>
    <property type="match status" value="1"/>
</dbReference>
<dbReference type="Gene3D" id="3.40.50.2300">
    <property type="match status" value="2"/>
</dbReference>
<dbReference type="InterPro" id="IPR006811">
    <property type="entry name" value="RNA_pol_II_suA"/>
</dbReference>
<dbReference type="PANTHER" id="PTHR20383">
    <property type="entry name" value="RNA POLYMERASE II SUBUNIT A C-TERMINAL DOMAIN PHOSPHATASE"/>
    <property type="match status" value="1"/>
</dbReference>
<dbReference type="Pfam" id="PF04722">
    <property type="entry name" value="Ssu72"/>
    <property type="match status" value="1"/>
</dbReference>
<name>SSU72_CHICK</name>
<organism>
    <name type="scientific">Gallus gallus</name>
    <name type="common">Chicken</name>
    <dbReference type="NCBI Taxonomy" id="9031"/>
    <lineage>
        <taxon>Eukaryota</taxon>
        <taxon>Metazoa</taxon>
        <taxon>Chordata</taxon>
        <taxon>Craniata</taxon>
        <taxon>Vertebrata</taxon>
        <taxon>Euteleostomi</taxon>
        <taxon>Archelosauria</taxon>
        <taxon>Archosauria</taxon>
        <taxon>Dinosauria</taxon>
        <taxon>Saurischia</taxon>
        <taxon>Theropoda</taxon>
        <taxon>Coelurosauria</taxon>
        <taxon>Aves</taxon>
        <taxon>Neognathae</taxon>
        <taxon>Galloanserae</taxon>
        <taxon>Galliformes</taxon>
        <taxon>Phasianidae</taxon>
        <taxon>Phasianinae</taxon>
        <taxon>Gallus</taxon>
    </lineage>
</organism>
<sequence length="194" mass="22574">MPSSPLRVAVVCSSNQNRSMEAHNILSKRGFSVRSFGTGTHVKLPGPAPDKPNVYDFKTTYDQMYNDLLRKDKELYTQNGILHMLDRNKRIKPRPERFQNCKDVFDLILTCEERVYDQVVEDLNSREQETCQPVHVINVDIQDNHEEATLGAFLICELCQCIQHTEDMENEIDELLQEFEEKSGRTFLHTVCFY</sequence>
<proteinExistence type="evidence at transcript level"/>
<keyword id="KW-0175">Coiled coil</keyword>
<keyword id="KW-0963">Cytoplasm</keyword>
<keyword id="KW-0378">Hydrolase</keyword>
<keyword id="KW-0507">mRNA processing</keyword>
<keyword id="KW-0539">Nucleus</keyword>
<keyword id="KW-0904">Protein phosphatase</keyword>
<keyword id="KW-1185">Reference proteome</keyword>